<proteinExistence type="inferred from homology"/>
<keyword id="KW-1185">Reference proteome</keyword>
<dbReference type="EMBL" id="BA000028">
    <property type="protein sequence ID" value="BAC13962.1"/>
    <property type="molecule type" value="Genomic_DNA"/>
</dbReference>
<dbReference type="RefSeq" id="WP_011066402.1">
    <property type="nucleotide sequence ID" value="NC_004193.1"/>
</dbReference>
<dbReference type="STRING" id="221109.gene:10734252"/>
<dbReference type="KEGG" id="oih:OB2006"/>
<dbReference type="eggNOG" id="COG3906">
    <property type="taxonomic scope" value="Bacteria"/>
</dbReference>
<dbReference type="HOGENOM" id="CLU_146610_2_1_9"/>
<dbReference type="OrthoDB" id="2086132at2"/>
<dbReference type="PhylomeDB" id="Q8EPT2"/>
<dbReference type="Proteomes" id="UP000000822">
    <property type="component" value="Chromosome"/>
</dbReference>
<dbReference type="HAMAP" id="MF_01448">
    <property type="entry name" value="UPF0473"/>
    <property type="match status" value="1"/>
</dbReference>
<dbReference type="InterPro" id="IPR009711">
    <property type="entry name" value="UPF0473"/>
</dbReference>
<dbReference type="NCBIfam" id="NF010217">
    <property type="entry name" value="PRK13678.1-4"/>
    <property type="match status" value="1"/>
</dbReference>
<dbReference type="NCBIfam" id="NF010222">
    <property type="entry name" value="PRK13678.2-5"/>
    <property type="match status" value="1"/>
</dbReference>
<dbReference type="PANTHER" id="PTHR40066">
    <property type="entry name" value="UPF0473 PROTEIN CBO2561/CLC_2432"/>
    <property type="match status" value="1"/>
</dbReference>
<dbReference type="PANTHER" id="PTHR40066:SF1">
    <property type="entry name" value="UPF0473 PROTEIN CBO2561_CLC_2432"/>
    <property type="match status" value="1"/>
</dbReference>
<dbReference type="Pfam" id="PF06949">
    <property type="entry name" value="DUF1292"/>
    <property type="match status" value="1"/>
</dbReference>
<gene>
    <name type="ordered locus">OB2006</name>
</gene>
<sequence length="92" mass="10913">MALEEKERIIIPDENGDEHLFEVLFTFDVDETEQSYIAVVPAEQAEEEEVEVYAFRFEEQENEDFTLFPIESDDEWQMVEEMLNTLAEEEEA</sequence>
<accession>Q8EPT2</accession>
<feature type="chain" id="PRO_0000304850" description="UPF0473 protein OB2006">
    <location>
        <begin position="1"/>
        <end position="92"/>
    </location>
</feature>
<name>Y2006_OCEIH</name>
<comment type="similarity">
    <text evidence="1">Belongs to the UPF0473 family.</text>
</comment>
<organism>
    <name type="scientific">Oceanobacillus iheyensis (strain DSM 14371 / CIP 107618 / JCM 11309 / KCTC 3954 / HTE831)</name>
    <dbReference type="NCBI Taxonomy" id="221109"/>
    <lineage>
        <taxon>Bacteria</taxon>
        <taxon>Bacillati</taxon>
        <taxon>Bacillota</taxon>
        <taxon>Bacilli</taxon>
        <taxon>Bacillales</taxon>
        <taxon>Bacillaceae</taxon>
        <taxon>Oceanobacillus</taxon>
    </lineage>
</organism>
<evidence type="ECO:0000255" key="1">
    <source>
        <dbReference type="HAMAP-Rule" id="MF_01448"/>
    </source>
</evidence>
<reference key="1">
    <citation type="journal article" date="2002" name="Nucleic Acids Res.">
        <title>Genome sequence of Oceanobacillus iheyensis isolated from the Iheya Ridge and its unexpected adaptive capabilities to extreme environments.</title>
        <authorList>
            <person name="Takami H."/>
            <person name="Takaki Y."/>
            <person name="Uchiyama I."/>
        </authorList>
    </citation>
    <scope>NUCLEOTIDE SEQUENCE [LARGE SCALE GENOMIC DNA]</scope>
    <source>
        <strain>DSM 14371 / CIP 107618 / JCM 11309 / KCTC 3954 / HTE831</strain>
    </source>
</reference>
<protein>
    <recommendedName>
        <fullName evidence="1">UPF0473 protein OB2006</fullName>
    </recommendedName>
</protein>